<feature type="chain" id="PRO_1000085632" description="Uracil phosphoribosyltransferase">
    <location>
        <begin position="1"/>
        <end position="211"/>
    </location>
</feature>
<feature type="binding site" evidence="1">
    <location>
        <position position="78"/>
    </location>
    <ligand>
        <name>5-phospho-alpha-D-ribose 1-diphosphate</name>
        <dbReference type="ChEBI" id="CHEBI:58017"/>
    </ligand>
</feature>
<feature type="binding site" evidence="1">
    <location>
        <position position="103"/>
    </location>
    <ligand>
        <name>5-phospho-alpha-D-ribose 1-diphosphate</name>
        <dbReference type="ChEBI" id="CHEBI:58017"/>
    </ligand>
</feature>
<feature type="binding site" evidence="1">
    <location>
        <begin position="130"/>
        <end position="138"/>
    </location>
    <ligand>
        <name>5-phospho-alpha-D-ribose 1-diphosphate</name>
        <dbReference type="ChEBI" id="CHEBI:58017"/>
    </ligand>
</feature>
<feature type="binding site" evidence="1">
    <location>
        <position position="195"/>
    </location>
    <ligand>
        <name>uracil</name>
        <dbReference type="ChEBI" id="CHEBI:17568"/>
    </ligand>
</feature>
<feature type="binding site" evidence="1">
    <location>
        <begin position="200"/>
        <end position="202"/>
    </location>
    <ligand>
        <name>uracil</name>
        <dbReference type="ChEBI" id="CHEBI:17568"/>
    </ligand>
</feature>
<feature type="binding site" evidence="1">
    <location>
        <position position="201"/>
    </location>
    <ligand>
        <name>5-phospho-alpha-D-ribose 1-diphosphate</name>
        <dbReference type="ChEBI" id="CHEBI:58017"/>
    </ligand>
</feature>
<accession>A9WLN5</accession>
<gene>
    <name evidence="1" type="primary">upp</name>
    <name type="ordered locus">RSal33209_0058</name>
</gene>
<reference key="1">
    <citation type="journal article" date="2008" name="J. Bacteriol.">
        <title>Genome sequence of the fish pathogen Renibacterium salmoninarum suggests reductive evolution away from an environmental Arthrobacter ancestor.</title>
        <authorList>
            <person name="Wiens G.D."/>
            <person name="Rockey D.D."/>
            <person name="Wu Z."/>
            <person name="Chang J."/>
            <person name="Levy R."/>
            <person name="Crane S."/>
            <person name="Chen D.S."/>
            <person name="Capri G.R."/>
            <person name="Burnett J.R."/>
            <person name="Sudheesh P.S."/>
            <person name="Schipma M.J."/>
            <person name="Burd H."/>
            <person name="Bhattacharyya A."/>
            <person name="Rhodes L.D."/>
            <person name="Kaul R."/>
            <person name="Strom M.S."/>
        </authorList>
    </citation>
    <scope>NUCLEOTIDE SEQUENCE [LARGE SCALE GENOMIC DNA]</scope>
    <source>
        <strain>ATCC 33209 / DSM 20767 / JCM 11484 / NBRC 15589 / NCIMB 2235</strain>
    </source>
</reference>
<comment type="function">
    <text evidence="1">Catalyzes the conversion of uracil and 5-phospho-alpha-D-ribose 1-diphosphate (PRPP) to UMP and diphosphate.</text>
</comment>
<comment type="catalytic activity">
    <reaction evidence="1">
        <text>UMP + diphosphate = 5-phospho-alpha-D-ribose 1-diphosphate + uracil</text>
        <dbReference type="Rhea" id="RHEA:13017"/>
        <dbReference type="ChEBI" id="CHEBI:17568"/>
        <dbReference type="ChEBI" id="CHEBI:33019"/>
        <dbReference type="ChEBI" id="CHEBI:57865"/>
        <dbReference type="ChEBI" id="CHEBI:58017"/>
        <dbReference type="EC" id="2.4.2.9"/>
    </reaction>
</comment>
<comment type="cofactor">
    <cofactor evidence="1">
        <name>Mg(2+)</name>
        <dbReference type="ChEBI" id="CHEBI:18420"/>
    </cofactor>
    <text evidence="1">Binds 1 Mg(2+) ion per subunit. The magnesium is bound as Mg-PRPP.</text>
</comment>
<comment type="activity regulation">
    <text evidence="1">Allosterically activated by GTP.</text>
</comment>
<comment type="pathway">
    <text evidence="1">Pyrimidine metabolism; UMP biosynthesis via salvage pathway; UMP from uracil: step 1/1.</text>
</comment>
<comment type="similarity">
    <text evidence="1">Belongs to the UPRTase family.</text>
</comment>
<proteinExistence type="inferred from homology"/>
<organism>
    <name type="scientific">Renibacterium salmoninarum (strain ATCC 33209 / DSM 20767 / JCM 11484 / NBRC 15589 / NCIMB 2235)</name>
    <dbReference type="NCBI Taxonomy" id="288705"/>
    <lineage>
        <taxon>Bacteria</taxon>
        <taxon>Bacillati</taxon>
        <taxon>Actinomycetota</taxon>
        <taxon>Actinomycetes</taxon>
        <taxon>Micrococcales</taxon>
        <taxon>Micrococcaceae</taxon>
        <taxon>Renibacterium</taxon>
    </lineage>
</organism>
<protein>
    <recommendedName>
        <fullName evidence="1">Uracil phosphoribosyltransferase</fullName>
        <ecNumber evidence="1">2.4.2.9</ecNumber>
    </recommendedName>
    <alternativeName>
        <fullName evidence="1">UMP pyrophosphorylase</fullName>
    </alternativeName>
    <alternativeName>
        <fullName evidence="1">UPRTase</fullName>
    </alternativeName>
</protein>
<dbReference type="EC" id="2.4.2.9" evidence="1"/>
<dbReference type="EMBL" id="CP000910">
    <property type="protein sequence ID" value="ABY21815.1"/>
    <property type="molecule type" value="Genomic_DNA"/>
</dbReference>
<dbReference type="RefSeq" id="WP_012243523.1">
    <property type="nucleotide sequence ID" value="NC_010168.1"/>
</dbReference>
<dbReference type="SMR" id="A9WLN5"/>
<dbReference type="STRING" id="288705.RSal33209_0058"/>
<dbReference type="KEGG" id="rsa:RSal33209_0058"/>
<dbReference type="eggNOG" id="COG0035">
    <property type="taxonomic scope" value="Bacteria"/>
</dbReference>
<dbReference type="HOGENOM" id="CLU_067096_2_3_11"/>
<dbReference type="UniPathway" id="UPA00574">
    <property type="reaction ID" value="UER00636"/>
</dbReference>
<dbReference type="Proteomes" id="UP000002007">
    <property type="component" value="Chromosome"/>
</dbReference>
<dbReference type="GO" id="GO:0005525">
    <property type="term" value="F:GTP binding"/>
    <property type="evidence" value="ECO:0007669"/>
    <property type="project" value="UniProtKB-KW"/>
</dbReference>
<dbReference type="GO" id="GO:0000287">
    <property type="term" value="F:magnesium ion binding"/>
    <property type="evidence" value="ECO:0007669"/>
    <property type="project" value="UniProtKB-UniRule"/>
</dbReference>
<dbReference type="GO" id="GO:0004845">
    <property type="term" value="F:uracil phosphoribosyltransferase activity"/>
    <property type="evidence" value="ECO:0007669"/>
    <property type="project" value="UniProtKB-UniRule"/>
</dbReference>
<dbReference type="GO" id="GO:0044206">
    <property type="term" value="P:UMP salvage"/>
    <property type="evidence" value="ECO:0007669"/>
    <property type="project" value="UniProtKB-UniRule"/>
</dbReference>
<dbReference type="GO" id="GO:0006223">
    <property type="term" value="P:uracil salvage"/>
    <property type="evidence" value="ECO:0007669"/>
    <property type="project" value="InterPro"/>
</dbReference>
<dbReference type="CDD" id="cd06223">
    <property type="entry name" value="PRTases_typeI"/>
    <property type="match status" value="1"/>
</dbReference>
<dbReference type="FunFam" id="3.40.50.2020:FF:000003">
    <property type="entry name" value="Uracil phosphoribosyltransferase"/>
    <property type="match status" value="1"/>
</dbReference>
<dbReference type="Gene3D" id="3.40.50.2020">
    <property type="match status" value="1"/>
</dbReference>
<dbReference type="HAMAP" id="MF_01218_B">
    <property type="entry name" value="Upp_B"/>
    <property type="match status" value="1"/>
</dbReference>
<dbReference type="InterPro" id="IPR000836">
    <property type="entry name" value="PRibTrfase_dom"/>
</dbReference>
<dbReference type="InterPro" id="IPR029057">
    <property type="entry name" value="PRTase-like"/>
</dbReference>
<dbReference type="InterPro" id="IPR034332">
    <property type="entry name" value="Upp_B"/>
</dbReference>
<dbReference type="InterPro" id="IPR050054">
    <property type="entry name" value="UPRTase/APRTase"/>
</dbReference>
<dbReference type="InterPro" id="IPR005765">
    <property type="entry name" value="Ura_phspho_trans"/>
</dbReference>
<dbReference type="NCBIfam" id="NF001097">
    <property type="entry name" value="PRK00129.1"/>
    <property type="match status" value="1"/>
</dbReference>
<dbReference type="NCBIfam" id="TIGR01091">
    <property type="entry name" value="upp"/>
    <property type="match status" value="1"/>
</dbReference>
<dbReference type="PANTHER" id="PTHR32315">
    <property type="entry name" value="ADENINE PHOSPHORIBOSYLTRANSFERASE"/>
    <property type="match status" value="1"/>
</dbReference>
<dbReference type="PANTHER" id="PTHR32315:SF4">
    <property type="entry name" value="URACIL PHOSPHORIBOSYLTRANSFERASE, CHLOROPLASTIC"/>
    <property type="match status" value="1"/>
</dbReference>
<dbReference type="Pfam" id="PF14681">
    <property type="entry name" value="UPRTase"/>
    <property type="match status" value="1"/>
</dbReference>
<dbReference type="SUPFAM" id="SSF53271">
    <property type="entry name" value="PRTase-like"/>
    <property type="match status" value="1"/>
</dbReference>
<name>UPP_RENSM</name>
<evidence type="ECO:0000255" key="1">
    <source>
        <dbReference type="HAMAP-Rule" id="MF_01218"/>
    </source>
</evidence>
<keyword id="KW-0021">Allosteric enzyme</keyword>
<keyword id="KW-0328">Glycosyltransferase</keyword>
<keyword id="KW-0342">GTP-binding</keyword>
<keyword id="KW-0460">Magnesium</keyword>
<keyword id="KW-0547">Nucleotide-binding</keyword>
<keyword id="KW-1185">Reference proteome</keyword>
<keyword id="KW-0808">Transferase</keyword>
<sequence>MRVLVVDHPLVAHKLTVLRDKNTPSPVFRQLTEELVTLLAYEATREVRVEEVSIETPVTKTVGTGLVKPTPLVVPILRAGLGMLEGMTRLLPTAEVGFLGMARNEETLEAITYAERLPEDLTGRQVYVLDPMLATGATLREAIKFLFARRALDITCICLLGAPEGIEALREQHEGANVTIVLASIDEGLNEKAYIVPGLGDAGDRLYGVVG</sequence>